<gene>
    <name type="ORF">ORF6</name>
</gene>
<feature type="chain" id="PRO_0000312568" description="Capsid protein">
    <location>
        <begin position="1"/>
        <end position="204"/>
    </location>
</feature>
<feature type="region of interest" description="Disordered" evidence="1">
    <location>
        <begin position="183"/>
        <end position="204"/>
    </location>
</feature>
<feature type="compositionally biased region" description="Polar residues" evidence="1">
    <location>
        <begin position="183"/>
        <end position="194"/>
    </location>
</feature>
<comment type="function">
    <text evidence="2">Component that constitutes the body part of the virion. Also acts as a movement protein that is involved in local cell-cell movement via plamodesmata. At least five viral proteins, CP, CPm, p6, p64 and Hsp70h are essential for cell-cell movement.</text>
</comment>
<comment type="subcellular location">
    <subcellularLocation>
        <location>Virion</location>
    </subcellularLocation>
</comment>
<comment type="similarity">
    <text evidence="3">Belongs to the closteroviridae capsid protein family.</text>
</comment>
<name>CAPSD_BYVU</name>
<evidence type="ECO:0000256" key="1">
    <source>
        <dbReference type="SAM" id="MobiDB-lite"/>
    </source>
</evidence>
<evidence type="ECO:0000269" key="2">
    <source>
    </source>
</evidence>
<evidence type="ECO:0000305" key="3"/>
<proteinExistence type="inferred from homology"/>
<sequence length="204" mass="22356">MGSAEPISAIATFENVSLADQTCLHGEDCDKLRKNFEECLKLKGVPEDNLGIALGLCLYSCATIGTSNKVNVQPTSTFIKASFGGGKELYLTHGELNSFLGSQKLLEGKPNKLRCFCRTFQKDYISLRKEYRGKLPPIARANRHGLPAEDHYLAADFISTSTELTDLQQSRLLLARENATHTEFSSESPVTSLKQLGRGLGTGR</sequence>
<keyword id="KW-0167">Capsid protein</keyword>
<keyword id="KW-1139">Helical capsid protein</keyword>
<keyword id="KW-1185">Reference proteome</keyword>
<keyword id="KW-0813">Transport</keyword>
<keyword id="KW-0916">Viral movement protein</keyword>
<keyword id="KW-0946">Virion</keyword>
<organism>
    <name type="scientific">Beet yellows virus (isolate Ukraine)</name>
    <name type="common">BYV</name>
    <name type="synonym">Sugar beet yellows virus</name>
    <dbReference type="NCBI Taxonomy" id="478555"/>
    <lineage>
        <taxon>Viruses</taxon>
        <taxon>Riboviria</taxon>
        <taxon>Orthornavirae</taxon>
        <taxon>Kitrinoviricota</taxon>
        <taxon>Alsuviricetes</taxon>
        <taxon>Martellivirales</taxon>
        <taxon>Closteroviridae</taxon>
        <taxon>Closterovirus</taxon>
        <taxon>Beet yellows virus</taxon>
    </lineage>
</organism>
<organismHost>
    <name type="scientific">Beta vulgaris</name>
    <name type="common">Sugar beet</name>
    <dbReference type="NCBI Taxonomy" id="161934"/>
</organismHost>
<protein>
    <recommendedName>
        <fullName>Capsid protein</fullName>
        <shortName>CP</shortName>
    </recommendedName>
    <alternativeName>
        <fullName>p22</fullName>
    </alternativeName>
</protein>
<dbReference type="EMBL" id="X53462">
    <property type="protein sequence ID" value="CAA37554.1"/>
    <property type="molecule type" value="Genomic_RNA"/>
</dbReference>
<dbReference type="EMBL" id="X73476">
    <property type="protein sequence ID" value="CAA51868.1"/>
    <property type="molecule type" value="Genomic_RNA"/>
</dbReference>
<dbReference type="PIR" id="S28715">
    <property type="entry name" value="S28715"/>
</dbReference>
<dbReference type="RefSeq" id="NP_041875.1">
    <property type="nucleotide sequence ID" value="NC_001598.1"/>
</dbReference>
<dbReference type="KEGG" id="vg:1724787"/>
<dbReference type="Proteomes" id="UP000000359">
    <property type="component" value="Segment"/>
</dbReference>
<dbReference type="GO" id="GO:0019029">
    <property type="term" value="C:helical viral capsid"/>
    <property type="evidence" value="ECO:0007669"/>
    <property type="project" value="UniProtKB-KW"/>
</dbReference>
<dbReference type="GO" id="GO:0046740">
    <property type="term" value="P:transport of virus in host, cell to cell"/>
    <property type="evidence" value="ECO:0007669"/>
    <property type="project" value="UniProtKB-KW"/>
</dbReference>
<dbReference type="InterPro" id="IPR002679">
    <property type="entry name" value="Closter_coat"/>
</dbReference>
<dbReference type="Pfam" id="PF01785">
    <property type="entry name" value="Closter_coat"/>
    <property type="match status" value="1"/>
</dbReference>
<reference key="1">
    <citation type="journal article" date="1991" name="J. Gen. Virol.">
        <title>Nucleotide sequence of the 3'-terminal half of beet yellows closterovirus RNA genome: unique arrangement of eight virus genes.</title>
        <authorList>
            <person name="Agranovsky A.A."/>
            <person name="Boyko V.P."/>
            <person name="Karasev A.V."/>
            <person name="Lunina N.A."/>
            <person name="Koonin E.V."/>
            <person name="Dolja V.V."/>
        </authorList>
    </citation>
    <scope>NUCLEOTIDE SEQUENCE [GENOMIC RNA]</scope>
</reference>
<reference key="2">
    <citation type="journal article" date="1994" name="Virology">
        <title>Beet yellows closterovirus: complete genome structure and identification of a leader papain-like thiol protease.</title>
        <authorList>
            <person name="Agranovsky A.A."/>
            <person name="Koonin E.V."/>
            <person name="Boyko V.P."/>
            <person name="Maiss E."/>
            <person name="Froetschl R."/>
            <person name="Lunina N.A."/>
            <person name="Atabekov J.G."/>
        </authorList>
    </citation>
    <scope>NUCLEOTIDE SEQUENCE [GENOMIC RNA]</scope>
</reference>
<reference key="3">
    <citation type="journal article" date="2001" name="EMBO J.">
        <title>Cell-to-cell movement and assembly of a plant closterovirus: roles for the capsid proteins and Hsp70 homolog.</title>
        <authorList>
            <person name="Alzhanova D.V."/>
            <person name="Napuli A.J."/>
            <person name="Creamer R."/>
            <person name="Dolja V.V."/>
        </authorList>
    </citation>
    <scope>FUNCTION</scope>
</reference>
<accession>Q08531</accession>